<proteinExistence type="inferred from homology"/>
<feature type="chain" id="PRO_0000219935" description="PqqA peptide cyclase">
    <location>
        <begin position="1"/>
        <end position="386"/>
    </location>
</feature>
<feature type="domain" description="Radical SAM core" evidence="2">
    <location>
        <begin position="9"/>
        <end position="228"/>
    </location>
</feature>
<feature type="binding site" evidence="1">
    <location>
        <position position="23"/>
    </location>
    <ligand>
        <name>[4Fe-4S] cluster</name>
        <dbReference type="ChEBI" id="CHEBI:49883"/>
        <note>4Fe-4S-S-AdoMet</note>
    </ligand>
</feature>
<feature type="binding site" evidence="1">
    <location>
        <position position="27"/>
    </location>
    <ligand>
        <name>[4Fe-4S] cluster</name>
        <dbReference type="ChEBI" id="CHEBI:49883"/>
        <note>4Fe-4S-S-AdoMet</note>
    </ligand>
</feature>
<feature type="binding site" evidence="1">
    <location>
        <position position="30"/>
    </location>
    <ligand>
        <name>[4Fe-4S] cluster</name>
        <dbReference type="ChEBI" id="CHEBI:49883"/>
        <note>4Fe-4S-S-AdoMet</note>
    </ligand>
</feature>
<protein>
    <recommendedName>
        <fullName evidence="1">PqqA peptide cyclase</fullName>
        <ecNumber evidence="1">1.21.98.4</ecNumber>
    </recommendedName>
    <alternativeName>
        <fullName evidence="1">Coenzyme PQQ synthesis protein E</fullName>
    </alternativeName>
    <alternativeName>
        <fullName evidence="1">Pyrroloquinoline quinone biosynthesis protein E</fullName>
    </alternativeName>
</protein>
<accession>Q6F9I9</accession>
<evidence type="ECO:0000255" key="1">
    <source>
        <dbReference type="HAMAP-Rule" id="MF_00660"/>
    </source>
</evidence>
<evidence type="ECO:0000255" key="2">
    <source>
        <dbReference type="PROSITE-ProRule" id="PRU01266"/>
    </source>
</evidence>
<evidence type="ECO:0000305" key="3"/>
<sequence>MNIPVSLQSKPPLWLLAELTYRCPLQCAYCSNPLDYAAVKQELSTDEWKDVFRQARAMGSVQLGFSGGEPLLRQDLSELIKYAHELGFYTNLITSGIGLTEQKIAEFSEAGLDHIQISFQASDPALSEILSGSRKAFQQKQAMALAVKKHRYPMVLNFVIHRFNIEQIDQIIELSLELNADYVELATCQFYGWAKLNQAALLPTPEQISYAQARVQAYRQYIDQHHLKTKLLLVAPDYYQERPKKCIGGWGQIFITVSPDGTVLPCQSAKDLPLEFPTIQDQSLKTIWNEAFAFNAFRGTDWMQEPCRSCPDKDKDLGGCRCQAYMLTKNMYATDPVCSKSPVHHQIVEARLQTQCSKPDISDLKLRNPQNSKLFFKRASDADSLL</sequence>
<dbReference type="EC" id="1.21.98.4" evidence="1"/>
<dbReference type="EMBL" id="CR543861">
    <property type="protein sequence ID" value="CAG69275.1"/>
    <property type="status" value="ALT_INIT"/>
    <property type="molecule type" value="Genomic_DNA"/>
</dbReference>
<dbReference type="RefSeq" id="WP_004928529.1">
    <property type="nucleotide sequence ID" value="NC_005966.1"/>
</dbReference>
<dbReference type="SMR" id="Q6F9I9"/>
<dbReference type="STRING" id="202950.GCA_001485005_01507"/>
<dbReference type="GeneID" id="45234794"/>
<dbReference type="KEGG" id="aci:ACIAD2507"/>
<dbReference type="eggNOG" id="COG0535">
    <property type="taxonomic scope" value="Bacteria"/>
</dbReference>
<dbReference type="HOGENOM" id="CLU_009273_4_7_6"/>
<dbReference type="OrthoDB" id="9792276at2"/>
<dbReference type="BioCyc" id="ASP62977:ACIAD_RS11385-MONOMER"/>
<dbReference type="UniPathway" id="UPA00539"/>
<dbReference type="Proteomes" id="UP000000430">
    <property type="component" value="Chromosome"/>
</dbReference>
<dbReference type="GO" id="GO:0051539">
    <property type="term" value="F:4 iron, 4 sulfur cluster binding"/>
    <property type="evidence" value="ECO:0007669"/>
    <property type="project" value="UniProtKB-KW"/>
</dbReference>
<dbReference type="GO" id="GO:0009975">
    <property type="term" value="F:cyclase activity"/>
    <property type="evidence" value="ECO:0007669"/>
    <property type="project" value="UniProtKB-UniRule"/>
</dbReference>
<dbReference type="GO" id="GO:0005506">
    <property type="term" value="F:iron ion binding"/>
    <property type="evidence" value="ECO:0007669"/>
    <property type="project" value="UniProtKB-UniRule"/>
</dbReference>
<dbReference type="GO" id="GO:0016491">
    <property type="term" value="F:oxidoreductase activity"/>
    <property type="evidence" value="ECO:0007669"/>
    <property type="project" value="UniProtKB-KW"/>
</dbReference>
<dbReference type="GO" id="GO:1904047">
    <property type="term" value="F:S-adenosyl-L-methionine binding"/>
    <property type="evidence" value="ECO:0007669"/>
    <property type="project" value="UniProtKB-UniRule"/>
</dbReference>
<dbReference type="GO" id="GO:0018189">
    <property type="term" value="P:pyrroloquinoline quinone biosynthetic process"/>
    <property type="evidence" value="ECO:0007669"/>
    <property type="project" value="UniProtKB-UniRule"/>
</dbReference>
<dbReference type="CDD" id="cd01335">
    <property type="entry name" value="Radical_SAM"/>
    <property type="match status" value="1"/>
</dbReference>
<dbReference type="CDD" id="cd21119">
    <property type="entry name" value="SPASM_PqqE"/>
    <property type="match status" value="1"/>
</dbReference>
<dbReference type="Gene3D" id="3.20.20.70">
    <property type="entry name" value="Aldolase class I"/>
    <property type="match status" value="1"/>
</dbReference>
<dbReference type="HAMAP" id="MF_00660">
    <property type="entry name" value="PqqE"/>
    <property type="match status" value="1"/>
</dbReference>
<dbReference type="InterPro" id="IPR023885">
    <property type="entry name" value="4Fe4S-binding_SPASM_dom"/>
</dbReference>
<dbReference type="InterPro" id="IPR013785">
    <property type="entry name" value="Aldolase_TIM"/>
</dbReference>
<dbReference type="InterPro" id="IPR006638">
    <property type="entry name" value="Elp3/MiaA/NifB-like_rSAM"/>
</dbReference>
<dbReference type="InterPro" id="IPR000385">
    <property type="entry name" value="MoaA_NifB_PqqE_Fe-S-bd_CS"/>
</dbReference>
<dbReference type="InterPro" id="IPR011843">
    <property type="entry name" value="PQQ_synth_PqqE_bac"/>
</dbReference>
<dbReference type="InterPro" id="IPR017200">
    <property type="entry name" value="PqqE-like"/>
</dbReference>
<dbReference type="InterPro" id="IPR050377">
    <property type="entry name" value="Radical_SAM_PqqE_MftC-like"/>
</dbReference>
<dbReference type="InterPro" id="IPR007197">
    <property type="entry name" value="rSAM"/>
</dbReference>
<dbReference type="NCBIfam" id="TIGR02109">
    <property type="entry name" value="PQQ_syn_pqqE"/>
    <property type="match status" value="1"/>
</dbReference>
<dbReference type="NCBIfam" id="TIGR04085">
    <property type="entry name" value="rSAM_more_4Fe4S"/>
    <property type="match status" value="1"/>
</dbReference>
<dbReference type="PANTHER" id="PTHR11228:SF7">
    <property type="entry name" value="PQQA PEPTIDE CYCLASE"/>
    <property type="match status" value="1"/>
</dbReference>
<dbReference type="PANTHER" id="PTHR11228">
    <property type="entry name" value="RADICAL SAM DOMAIN PROTEIN"/>
    <property type="match status" value="1"/>
</dbReference>
<dbReference type="Pfam" id="PF13353">
    <property type="entry name" value="Fer4_12"/>
    <property type="match status" value="1"/>
</dbReference>
<dbReference type="Pfam" id="PF04055">
    <property type="entry name" value="Radical_SAM"/>
    <property type="match status" value="1"/>
</dbReference>
<dbReference type="Pfam" id="PF13186">
    <property type="entry name" value="SPASM"/>
    <property type="match status" value="1"/>
</dbReference>
<dbReference type="PIRSF" id="PIRSF037420">
    <property type="entry name" value="PQQ_syn_pqqE"/>
    <property type="match status" value="1"/>
</dbReference>
<dbReference type="SFLD" id="SFLDF00280">
    <property type="entry name" value="coenzyme_PQQ_synthesis_protein"/>
    <property type="match status" value="1"/>
</dbReference>
<dbReference type="SFLD" id="SFLDG01067">
    <property type="entry name" value="SPASM/twitch_domain_containing"/>
    <property type="match status" value="1"/>
</dbReference>
<dbReference type="SMART" id="SM00729">
    <property type="entry name" value="Elp3"/>
    <property type="match status" value="1"/>
</dbReference>
<dbReference type="SUPFAM" id="SSF102114">
    <property type="entry name" value="Radical SAM enzymes"/>
    <property type="match status" value="1"/>
</dbReference>
<dbReference type="PROSITE" id="PS01305">
    <property type="entry name" value="MOAA_NIFB_PQQE"/>
    <property type="match status" value="1"/>
</dbReference>
<dbReference type="PROSITE" id="PS51918">
    <property type="entry name" value="RADICAL_SAM"/>
    <property type="match status" value="1"/>
</dbReference>
<keyword id="KW-0004">4Fe-4S</keyword>
<keyword id="KW-0408">Iron</keyword>
<keyword id="KW-0411">Iron-sulfur</keyword>
<keyword id="KW-0479">Metal-binding</keyword>
<keyword id="KW-0560">Oxidoreductase</keyword>
<keyword id="KW-0884">PQQ biosynthesis</keyword>
<keyword id="KW-0949">S-adenosyl-L-methionine</keyword>
<gene>
    <name evidence="1" type="primary">pqqE</name>
    <name type="ordered locus">ACIAD2507</name>
</gene>
<reference key="1">
    <citation type="journal article" date="2004" name="Nucleic Acids Res.">
        <title>Unique features revealed by the genome sequence of Acinetobacter sp. ADP1, a versatile and naturally transformation competent bacterium.</title>
        <authorList>
            <person name="Barbe V."/>
            <person name="Vallenet D."/>
            <person name="Fonknechten N."/>
            <person name="Kreimeyer A."/>
            <person name="Oztas S."/>
            <person name="Labarre L."/>
            <person name="Cruveiller S."/>
            <person name="Robert C."/>
            <person name="Duprat S."/>
            <person name="Wincker P."/>
            <person name="Ornston L.N."/>
            <person name="Weissenbach J."/>
            <person name="Marliere P."/>
            <person name="Cohen G.N."/>
            <person name="Medigue C."/>
        </authorList>
    </citation>
    <scope>NUCLEOTIDE SEQUENCE [LARGE SCALE GENOMIC DNA]</scope>
    <source>
        <strain>ATCC 33305 / BD413 / ADP1</strain>
    </source>
</reference>
<organism>
    <name type="scientific">Acinetobacter baylyi (strain ATCC 33305 / BD413 / ADP1)</name>
    <dbReference type="NCBI Taxonomy" id="62977"/>
    <lineage>
        <taxon>Bacteria</taxon>
        <taxon>Pseudomonadati</taxon>
        <taxon>Pseudomonadota</taxon>
        <taxon>Gammaproteobacteria</taxon>
        <taxon>Moraxellales</taxon>
        <taxon>Moraxellaceae</taxon>
        <taxon>Acinetobacter</taxon>
    </lineage>
</organism>
<name>PQQE_ACIAD</name>
<comment type="function">
    <text evidence="1">Catalyzes the cross-linking of a glutamate residue and a tyrosine residue in the PqqA protein as part of the biosynthesis of pyrroloquinoline quinone (PQQ).</text>
</comment>
<comment type="catalytic activity">
    <reaction evidence="1">
        <text>[PQQ precursor protein] + S-adenosyl-L-methionine = E-Y cross-linked-[PQQ precursor protein] + 5'-deoxyadenosine + L-methionine + H(+)</text>
        <dbReference type="Rhea" id="RHEA:56836"/>
        <dbReference type="Rhea" id="RHEA-COMP:14800"/>
        <dbReference type="Rhea" id="RHEA-COMP:14801"/>
        <dbReference type="ChEBI" id="CHEBI:15378"/>
        <dbReference type="ChEBI" id="CHEBI:17319"/>
        <dbReference type="ChEBI" id="CHEBI:57844"/>
        <dbReference type="ChEBI" id="CHEBI:59789"/>
        <dbReference type="ChEBI" id="CHEBI:141026"/>
        <dbReference type="ChEBI" id="CHEBI:141027"/>
        <dbReference type="EC" id="1.21.98.4"/>
    </reaction>
</comment>
<comment type="cofactor">
    <cofactor evidence="1">
        <name>[4Fe-4S] cluster</name>
        <dbReference type="ChEBI" id="CHEBI:49883"/>
    </cofactor>
    <text evidence="1">Binds 1 [4Fe-4S] cluster. The cluster is coordinated with 3 cysteines and an exchangeable S-adenosyl-L-methionine.</text>
</comment>
<comment type="pathway">
    <text evidence="1">Cofactor biosynthesis; pyrroloquinoline quinone biosynthesis.</text>
</comment>
<comment type="subunit">
    <text evidence="1">Interacts with PqqD. The interaction is necessary for activity of PqqE.</text>
</comment>
<comment type="similarity">
    <text evidence="1">Belongs to the radical SAM superfamily. PqqE family.</text>
</comment>
<comment type="sequence caution" evidence="3">
    <conflict type="erroneous initiation">
        <sequence resource="EMBL-CDS" id="CAG69275"/>
    </conflict>
</comment>